<reference key="1">
    <citation type="journal article" date="2005" name="Nucleic Acids Res.">
        <title>Genome dynamics and diversity of Shigella species, the etiologic agents of bacillary dysentery.</title>
        <authorList>
            <person name="Yang F."/>
            <person name="Yang J."/>
            <person name="Zhang X."/>
            <person name="Chen L."/>
            <person name="Jiang Y."/>
            <person name="Yan Y."/>
            <person name="Tang X."/>
            <person name="Wang J."/>
            <person name="Xiong Z."/>
            <person name="Dong J."/>
            <person name="Xue Y."/>
            <person name="Zhu Y."/>
            <person name="Xu X."/>
            <person name="Sun L."/>
            <person name="Chen S."/>
            <person name="Nie H."/>
            <person name="Peng J."/>
            <person name="Xu J."/>
            <person name="Wang Y."/>
            <person name="Yuan Z."/>
            <person name="Wen Y."/>
            <person name="Yao Z."/>
            <person name="Shen Y."/>
            <person name="Qiang B."/>
            <person name="Hou Y."/>
            <person name="Yu J."/>
            <person name="Jin Q."/>
        </authorList>
    </citation>
    <scope>NUCLEOTIDE SEQUENCE [LARGE SCALE GENOMIC DNA]</scope>
    <source>
        <strain>Ss046</strain>
    </source>
</reference>
<protein>
    <recommendedName>
        <fullName evidence="1">2-succinyl-6-hydroxy-2,4-cyclohexadiene-1-carboxylate synthase</fullName>
        <shortName evidence="1">SHCHC synthase</shortName>
        <ecNumber evidence="1">4.2.99.20</ecNumber>
    </recommendedName>
</protein>
<gene>
    <name evidence="1" type="primary">menH</name>
    <name type="ordered locus">SSON_2324</name>
</gene>
<accession>Q3YZU3</accession>
<organism>
    <name type="scientific">Shigella sonnei (strain Ss046)</name>
    <dbReference type="NCBI Taxonomy" id="300269"/>
    <lineage>
        <taxon>Bacteria</taxon>
        <taxon>Pseudomonadati</taxon>
        <taxon>Pseudomonadota</taxon>
        <taxon>Gammaproteobacteria</taxon>
        <taxon>Enterobacterales</taxon>
        <taxon>Enterobacteriaceae</taxon>
        <taxon>Shigella</taxon>
    </lineage>
</organism>
<comment type="function">
    <text evidence="1">Catalyzes a proton abstraction reaction that results in 2,5-elimination of pyruvate from 2-succinyl-5-enolpyruvyl-6-hydroxy-3-cyclohexene-1-carboxylate (SEPHCHC) and the formation of 2-succinyl-6-hydroxy-2,4-cyclohexadiene-1-carboxylate (SHCHC).</text>
</comment>
<comment type="catalytic activity">
    <reaction evidence="1">
        <text>5-enolpyruvoyl-6-hydroxy-2-succinyl-cyclohex-3-ene-1-carboxylate = (1R,6R)-6-hydroxy-2-succinyl-cyclohexa-2,4-diene-1-carboxylate + pyruvate</text>
        <dbReference type="Rhea" id="RHEA:25597"/>
        <dbReference type="ChEBI" id="CHEBI:15361"/>
        <dbReference type="ChEBI" id="CHEBI:58689"/>
        <dbReference type="ChEBI" id="CHEBI:58818"/>
        <dbReference type="EC" id="4.2.99.20"/>
    </reaction>
</comment>
<comment type="pathway">
    <text evidence="1">Quinol/quinone metabolism; 1,4-dihydroxy-2-naphthoate biosynthesis; 1,4-dihydroxy-2-naphthoate from chorismate: step 3/7.</text>
</comment>
<comment type="pathway">
    <text evidence="1">Quinol/quinone metabolism; menaquinone biosynthesis.</text>
</comment>
<comment type="subunit">
    <text evidence="1">Monomer.</text>
</comment>
<comment type="similarity">
    <text evidence="1">Belongs to the AB hydrolase superfamily. MenH family.</text>
</comment>
<name>MENH_SHISS</name>
<sequence length="252" mass="27774">MILHAQAKHGKPGLPWLVFLHGFSGDCHEWQEVGEAFADYSRLYVYLPGHGGSAAISVDGFDDVTDLLRKTLVSYNILNFWLVGYSLGGRVAMMAACQGMPGLCGVVVEGGHPGLQNAEQRAERQRSDRQWAQRFRTEPLTAVFADWYQQPVFASLNDDQRRELVALRSNNNGATLAAMLEATSLAVQPDLRANLSARTFAFYYLCGERDSKFRALAAELAADCHVIPRAGHNAHRENPAGVIASLAQILRF</sequence>
<proteinExistence type="inferred from homology"/>
<evidence type="ECO:0000255" key="1">
    <source>
        <dbReference type="HAMAP-Rule" id="MF_01660"/>
    </source>
</evidence>
<dbReference type="EC" id="4.2.99.20" evidence="1"/>
<dbReference type="EMBL" id="CP000038">
    <property type="protein sequence ID" value="AAZ88969.1"/>
    <property type="molecule type" value="Genomic_DNA"/>
</dbReference>
<dbReference type="RefSeq" id="WP_000600530.1">
    <property type="nucleotide sequence ID" value="NC_007384.1"/>
</dbReference>
<dbReference type="SMR" id="Q3YZU3"/>
<dbReference type="ESTHER" id="shifl-YFBB">
    <property type="family name" value="MenH_SHCHC"/>
</dbReference>
<dbReference type="GeneID" id="93774910"/>
<dbReference type="KEGG" id="ssn:SSON_2324"/>
<dbReference type="HOGENOM" id="CLU_020336_38_2_6"/>
<dbReference type="UniPathway" id="UPA00079"/>
<dbReference type="UniPathway" id="UPA01057">
    <property type="reaction ID" value="UER00900"/>
</dbReference>
<dbReference type="Proteomes" id="UP000002529">
    <property type="component" value="Chromosome"/>
</dbReference>
<dbReference type="GO" id="GO:0070205">
    <property type="term" value="F:2-succinyl-6-hydroxy-2,4-cyclohexadiene-1-carboxylate synthase activity"/>
    <property type="evidence" value="ECO:0007669"/>
    <property type="project" value="UniProtKB-UniRule"/>
</dbReference>
<dbReference type="GO" id="GO:0009234">
    <property type="term" value="P:menaquinone biosynthetic process"/>
    <property type="evidence" value="ECO:0007669"/>
    <property type="project" value="UniProtKB-UniRule"/>
</dbReference>
<dbReference type="FunFam" id="3.40.50.1820:FF:000038">
    <property type="entry name" value="2-succinyl-6-hydroxy-2,4-cyclohexadiene-1-carboxylate synthase"/>
    <property type="match status" value="1"/>
</dbReference>
<dbReference type="Gene3D" id="3.40.50.1820">
    <property type="entry name" value="alpha/beta hydrolase"/>
    <property type="match status" value="1"/>
</dbReference>
<dbReference type="HAMAP" id="MF_01660">
    <property type="entry name" value="MenH"/>
    <property type="match status" value="1"/>
</dbReference>
<dbReference type="InterPro" id="IPR000073">
    <property type="entry name" value="AB_hydrolase_1"/>
</dbReference>
<dbReference type="InterPro" id="IPR029058">
    <property type="entry name" value="AB_hydrolase_fold"/>
</dbReference>
<dbReference type="InterPro" id="IPR022485">
    <property type="entry name" value="SHCHC_synthase_MenH"/>
</dbReference>
<dbReference type="NCBIfam" id="TIGR03695">
    <property type="entry name" value="menH_SHCHC"/>
    <property type="match status" value="1"/>
</dbReference>
<dbReference type="NCBIfam" id="NF008340">
    <property type="entry name" value="PRK11126.1"/>
    <property type="match status" value="1"/>
</dbReference>
<dbReference type="PANTHER" id="PTHR42916">
    <property type="entry name" value="2-SUCCINYL-5-ENOLPYRUVYL-6-HYDROXY-3-CYCLOHEXENE-1-CARBOXYLATE SYNTHASE"/>
    <property type="match status" value="1"/>
</dbReference>
<dbReference type="PANTHER" id="PTHR42916:SF1">
    <property type="entry name" value="PROTEIN PHYLLO, CHLOROPLASTIC"/>
    <property type="match status" value="1"/>
</dbReference>
<dbReference type="Pfam" id="PF12697">
    <property type="entry name" value="Abhydrolase_6"/>
    <property type="match status" value="1"/>
</dbReference>
<dbReference type="SUPFAM" id="SSF53474">
    <property type="entry name" value="alpha/beta-Hydrolases"/>
    <property type="match status" value="1"/>
</dbReference>
<keyword id="KW-0456">Lyase</keyword>
<keyword id="KW-0474">Menaquinone biosynthesis</keyword>
<keyword id="KW-1185">Reference proteome</keyword>
<feature type="chain" id="PRO_0000341928" description="2-succinyl-6-hydroxy-2,4-cyclohexadiene-1-carboxylate synthase">
    <location>
        <begin position="1"/>
        <end position="252"/>
    </location>
</feature>